<name>PELD_PECCA</name>
<protein>
    <recommendedName>
        <fullName>Pectin lyase</fullName>
        <ecNumber>4.2.2.10</ecNumber>
    </recommendedName>
</protein>
<organism>
    <name type="scientific">Pectobacterium carotovorum</name>
    <name type="common">Erwinia carotovora</name>
    <dbReference type="NCBI Taxonomy" id="554"/>
    <lineage>
        <taxon>Bacteria</taxon>
        <taxon>Pseudomonadati</taxon>
        <taxon>Pseudomonadota</taxon>
        <taxon>Gammaproteobacteria</taxon>
        <taxon>Enterobacterales</taxon>
        <taxon>Pectobacteriaceae</taxon>
        <taxon>Pectobacterium</taxon>
    </lineage>
</organism>
<comment type="catalytic activity">
    <reaction>
        <text>Eliminative cleavage of (1-&gt;4)-alpha-D-galacturonan methyl ester to give oligosaccharides with 4-deoxy-6-O-methyl-alpha-D-galact-4-enuronosyl groups at their non-reducing ends.</text>
        <dbReference type="EC" id="4.2.2.10"/>
    </reaction>
</comment>
<comment type="induction">
    <text>By DNA-damaging agents such as nalidixic acid, mitomycin C or UV light.</text>
</comment>
<comment type="miscellaneous">
    <text>In most stains, pnl production is accompanied by cell lysis and production of a bacteriocin.</text>
</comment>
<comment type="similarity">
    <text evidence="2">Belongs to the polysaccharide lyase 1 family.</text>
</comment>
<proteinExistence type="evidence at protein level"/>
<reference key="1">
    <citation type="journal article" date="1991" name="Biochem. Biophys. Res. Commun.">
        <title>Nucleotide sequence of pnl gene from Erwinia carotovora Er.</title>
        <authorList>
            <person name="Ohnishi H."/>
            <person name="Nishida T."/>
            <person name="Yoshida A."/>
            <person name="Kamio Y."/>
            <person name="Izaki K."/>
        </authorList>
    </citation>
    <scope>NUCLEOTIDE SEQUENCE [GENOMIC DNA]</scope>
    <source>
        <strain>Er</strain>
    </source>
</reference>
<reference key="2">
    <citation type="journal article" date="1990" name="Biochem. Biophys. Res. Commun.">
        <title>Cloning and expression of pectin lyase gene from Erwinia carotovora in Escherichia coli.</title>
        <authorList>
            <person name="Nishida T."/>
            <person name="Suzuki T."/>
            <person name="Ito K."/>
            <person name="Kamio Y."/>
            <person name="Izaki K."/>
        </authorList>
    </citation>
    <scope>PROTEIN SEQUENCE OF 1-18</scope>
    <source>
        <strain>Er</strain>
    </source>
</reference>
<reference key="3">
    <citation type="journal article" date="1994" name="Biosci. Biotechnol. Biochem.">
        <title>Analysis of promoter region of the pectin lyase gene from Erwinia carotovora Er.</title>
        <authorList>
            <person name="Ohnishi H."/>
            <person name="Nikaidou N."/>
            <person name="Kamio Y."/>
            <person name="Izaki K."/>
        </authorList>
    </citation>
    <scope>NUCLEOTIDE SEQUENCE [GENOMIC DNA] OF 1-20</scope>
</reference>
<gene>
    <name type="primary">pnl</name>
</gene>
<accession>P24112</accession>
<sequence>MAYPTTNLTGLIGFAKAAKVTGGTGGKVVTVNSLADFKSAVSGSAKTIVVLGSSLKTSALTKVVFGSNKTIVGSFGGANVLTNIHLRAESNSSNVIFQNLVFKHDVAIKDNDDIQLYLNYGKGYWVDHCSWPGHTWSDNDGSLDKLIYIGEKADYITISNCLFSNHKYGCIFGHPADDNNSAYNGYPRLTICHNYYENIQVRAPGLMRYGYFHVFNNYVNKFQLAFTVAQNANVISERNVFGSGAEKKGMVDDKGNGSTFTDNGSSPAAVASKSPAAKWTASSNYSYSLMTTAAAQSWVVSNAGAQNSALKFPS</sequence>
<evidence type="ECO:0000255" key="1"/>
<evidence type="ECO:0000305" key="2"/>
<keyword id="KW-0903">Direct protein sequencing</keyword>
<keyword id="KW-0456">Lyase</keyword>
<feature type="chain" id="PRO_0000212995" description="Pectin lyase">
    <location>
        <begin position="1"/>
        <end position="314"/>
    </location>
</feature>
<feature type="active site" evidence="1">
    <location>
        <position position="202"/>
    </location>
</feature>
<dbReference type="EC" id="4.2.2.10"/>
<dbReference type="EMBL" id="M65057">
    <property type="protein sequence ID" value="AAA24857.1"/>
    <property type="molecule type" value="Genomic_DNA"/>
</dbReference>
<dbReference type="PIR" id="JH0389">
    <property type="entry name" value="JH0389"/>
</dbReference>
<dbReference type="SMR" id="P24112"/>
<dbReference type="CAZy" id="PL1">
    <property type="family name" value="Polysaccharide Lyase Family 1"/>
</dbReference>
<dbReference type="GO" id="GO:0030570">
    <property type="term" value="F:pectate lyase activity"/>
    <property type="evidence" value="ECO:0007669"/>
    <property type="project" value="InterPro"/>
</dbReference>
<dbReference type="GO" id="GO:0047490">
    <property type="term" value="F:pectin lyase activity"/>
    <property type="evidence" value="ECO:0007669"/>
    <property type="project" value="UniProtKB-EC"/>
</dbReference>
<dbReference type="Gene3D" id="2.160.20.10">
    <property type="entry name" value="Single-stranded right-handed beta-helix, Pectin lyase-like"/>
    <property type="match status" value="1"/>
</dbReference>
<dbReference type="InterPro" id="IPR002022">
    <property type="entry name" value="Pec_lyase"/>
</dbReference>
<dbReference type="InterPro" id="IPR012334">
    <property type="entry name" value="Pectin_lyas_fold"/>
</dbReference>
<dbReference type="InterPro" id="IPR011050">
    <property type="entry name" value="Pectin_lyase_fold/virulence"/>
</dbReference>
<dbReference type="InterPro" id="IPR045032">
    <property type="entry name" value="PEL"/>
</dbReference>
<dbReference type="PANTHER" id="PTHR31683">
    <property type="entry name" value="PECTATE LYASE 18-RELATED"/>
    <property type="match status" value="1"/>
</dbReference>
<dbReference type="PANTHER" id="PTHR31683:SF18">
    <property type="entry name" value="PECTATE LYASE 21-RELATED"/>
    <property type="match status" value="1"/>
</dbReference>
<dbReference type="Pfam" id="PF00544">
    <property type="entry name" value="Pectate_lyase_4"/>
    <property type="match status" value="1"/>
</dbReference>
<dbReference type="SMART" id="SM00656">
    <property type="entry name" value="Amb_all"/>
    <property type="match status" value="1"/>
</dbReference>
<dbReference type="SUPFAM" id="SSF51126">
    <property type="entry name" value="Pectin lyase-like"/>
    <property type="match status" value="1"/>
</dbReference>